<organism>
    <name type="scientific">Brucella abortus (strain 2308)</name>
    <dbReference type="NCBI Taxonomy" id="359391"/>
    <lineage>
        <taxon>Bacteria</taxon>
        <taxon>Pseudomonadati</taxon>
        <taxon>Pseudomonadota</taxon>
        <taxon>Alphaproteobacteria</taxon>
        <taxon>Hyphomicrobiales</taxon>
        <taxon>Brucellaceae</taxon>
        <taxon>Brucella/Ochrobactrum group</taxon>
        <taxon>Brucella</taxon>
    </lineage>
</organism>
<feature type="chain" id="PRO_0000435880" description="DNA repair protein RadA">
    <location>
        <begin position="1"/>
        <end position="467"/>
    </location>
</feature>
<feature type="zinc finger region" description="C4-type" evidence="1">
    <location>
        <begin position="10"/>
        <end position="27"/>
    </location>
</feature>
<feature type="region of interest" description="Lon-protease-like" evidence="1">
    <location>
        <begin position="359"/>
        <end position="467"/>
    </location>
</feature>
<feature type="short sequence motif" description="RadA KNRFG motif" evidence="1">
    <location>
        <begin position="260"/>
        <end position="264"/>
    </location>
</feature>
<feature type="binding site" evidence="1">
    <location>
        <begin position="98"/>
        <end position="105"/>
    </location>
    <ligand>
        <name>ATP</name>
        <dbReference type="ChEBI" id="CHEBI:30616"/>
    </ligand>
</feature>
<name>RADA_BRUA2</name>
<proteinExistence type="inferred from homology"/>
<accession>Q2YMH5</accession>
<dbReference type="EC" id="3.6.4.-" evidence="1"/>
<dbReference type="EMBL" id="AM040264">
    <property type="protein sequence ID" value="CAJ10430.1"/>
    <property type="molecule type" value="Genomic_DNA"/>
</dbReference>
<dbReference type="RefSeq" id="WP_002963605.1">
    <property type="nucleotide sequence ID" value="NZ_KN046823.1"/>
</dbReference>
<dbReference type="SMR" id="Q2YMH5"/>
<dbReference type="STRING" id="359391.BAB1_0474"/>
<dbReference type="MEROPS" id="S16.A04"/>
<dbReference type="GeneID" id="93017105"/>
<dbReference type="KEGG" id="bmf:BAB1_0474"/>
<dbReference type="PATRIC" id="fig|359391.11.peg.2514"/>
<dbReference type="HOGENOM" id="CLU_018264_0_1_5"/>
<dbReference type="PhylomeDB" id="Q2YMH5"/>
<dbReference type="Proteomes" id="UP000002719">
    <property type="component" value="Chromosome I"/>
</dbReference>
<dbReference type="GO" id="GO:0005829">
    <property type="term" value="C:cytosol"/>
    <property type="evidence" value="ECO:0007669"/>
    <property type="project" value="TreeGrafter"/>
</dbReference>
<dbReference type="GO" id="GO:0005524">
    <property type="term" value="F:ATP binding"/>
    <property type="evidence" value="ECO:0007669"/>
    <property type="project" value="UniProtKB-UniRule"/>
</dbReference>
<dbReference type="GO" id="GO:0016887">
    <property type="term" value="F:ATP hydrolysis activity"/>
    <property type="evidence" value="ECO:0007669"/>
    <property type="project" value="InterPro"/>
</dbReference>
<dbReference type="GO" id="GO:0140664">
    <property type="term" value="F:ATP-dependent DNA damage sensor activity"/>
    <property type="evidence" value="ECO:0007669"/>
    <property type="project" value="InterPro"/>
</dbReference>
<dbReference type="GO" id="GO:0003684">
    <property type="term" value="F:damaged DNA binding"/>
    <property type="evidence" value="ECO:0007669"/>
    <property type="project" value="InterPro"/>
</dbReference>
<dbReference type="GO" id="GO:0008270">
    <property type="term" value="F:zinc ion binding"/>
    <property type="evidence" value="ECO:0007669"/>
    <property type="project" value="UniProtKB-KW"/>
</dbReference>
<dbReference type="GO" id="GO:0000725">
    <property type="term" value="P:recombinational repair"/>
    <property type="evidence" value="ECO:0007669"/>
    <property type="project" value="UniProtKB-UniRule"/>
</dbReference>
<dbReference type="CDD" id="cd01121">
    <property type="entry name" value="RadA_SMS_N"/>
    <property type="match status" value="1"/>
</dbReference>
<dbReference type="FunFam" id="3.40.50.300:FF:000050">
    <property type="entry name" value="DNA repair protein RadA"/>
    <property type="match status" value="1"/>
</dbReference>
<dbReference type="Gene3D" id="3.30.230.10">
    <property type="match status" value="1"/>
</dbReference>
<dbReference type="Gene3D" id="3.40.50.300">
    <property type="entry name" value="P-loop containing nucleotide triphosphate hydrolases"/>
    <property type="match status" value="1"/>
</dbReference>
<dbReference type="HAMAP" id="MF_01498">
    <property type="entry name" value="RadA_bact"/>
    <property type="match status" value="1"/>
</dbReference>
<dbReference type="InterPro" id="IPR003593">
    <property type="entry name" value="AAA+_ATPase"/>
</dbReference>
<dbReference type="InterPro" id="IPR004504">
    <property type="entry name" value="DNA_repair_RadA"/>
</dbReference>
<dbReference type="InterPro" id="IPR027417">
    <property type="entry name" value="P-loop_NTPase"/>
</dbReference>
<dbReference type="InterPro" id="IPR020588">
    <property type="entry name" value="RecA_ATP-bd"/>
</dbReference>
<dbReference type="InterPro" id="IPR020568">
    <property type="entry name" value="Ribosomal_Su5_D2-typ_SF"/>
</dbReference>
<dbReference type="InterPro" id="IPR014721">
    <property type="entry name" value="Ribsml_uS5_D2-typ_fold_subgr"/>
</dbReference>
<dbReference type="InterPro" id="IPR041166">
    <property type="entry name" value="Rubredoxin_2"/>
</dbReference>
<dbReference type="NCBIfam" id="TIGR00416">
    <property type="entry name" value="sms"/>
    <property type="match status" value="1"/>
</dbReference>
<dbReference type="PANTHER" id="PTHR32472">
    <property type="entry name" value="DNA REPAIR PROTEIN RADA"/>
    <property type="match status" value="1"/>
</dbReference>
<dbReference type="PANTHER" id="PTHR32472:SF10">
    <property type="entry name" value="DNA REPAIR PROTEIN RADA-LIKE PROTEIN"/>
    <property type="match status" value="1"/>
</dbReference>
<dbReference type="Pfam" id="PF13481">
    <property type="entry name" value="AAA_25"/>
    <property type="match status" value="1"/>
</dbReference>
<dbReference type="Pfam" id="PF13541">
    <property type="entry name" value="ChlI"/>
    <property type="match status" value="1"/>
</dbReference>
<dbReference type="Pfam" id="PF18073">
    <property type="entry name" value="Zn_ribbon_LapB"/>
    <property type="match status" value="1"/>
</dbReference>
<dbReference type="PRINTS" id="PR01874">
    <property type="entry name" value="DNAREPAIRADA"/>
</dbReference>
<dbReference type="SMART" id="SM00382">
    <property type="entry name" value="AAA"/>
    <property type="match status" value="1"/>
</dbReference>
<dbReference type="SUPFAM" id="SSF52540">
    <property type="entry name" value="P-loop containing nucleoside triphosphate hydrolases"/>
    <property type="match status" value="1"/>
</dbReference>
<dbReference type="SUPFAM" id="SSF54211">
    <property type="entry name" value="Ribosomal protein S5 domain 2-like"/>
    <property type="match status" value="1"/>
</dbReference>
<dbReference type="PROSITE" id="PS50162">
    <property type="entry name" value="RECA_2"/>
    <property type="match status" value="1"/>
</dbReference>
<reference key="1">
    <citation type="journal article" date="2005" name="Infect. Immun.">
        <title>Whole-genome analyses of speciation events in pathogenic Brucellae.</title>
        <authorList>
            <person name="Chain P.S."/>
            <person name="Comerci D.J."/>
            <person name="Tolmasky M.E."/>
            <person name="Larimer F.W."/>
            <person name="Malfatti S.A."/>
            <person name="Vergez L.M."/>
            <person name="Aguero F."/>
            <person name="Land M.L."/>
            <person name="Ugalde R.A."/>
            <person name="Garcia E."/>
        </authorList>
    </citation>
    <scope>NUCLEOTIDE SEQUENCE [LARGE SCALE GENOMIC DNA]</scope>
    <source>
        <strain>2308</strain>
    </source>
</reference>
<reference key="2">
    <citation type="journal article" date="2006" name="J. Bacteriol.">
        <title>RecA and RadA proteins of Brucella abortus do not perform overlapping protective DNA repair functions following oxidative burst.</title>
        <authorList>
            <person name="Roux C.M."/>
            <person name="Booth N.J."/>
            <person name="Bellaire B.H."/>
            <person name="Gee J.M."/>
            <person name="Roop R.M. II"/>
            <person name="Kovach M.E."/>
            <person name="Tsolis R.M."/>
            <person name="Elzer P.H."/>
            <person name="Ennis D.G."/>
        </authorList>
    </citation>
    <scope>DISRUPTION PHENOTYPE</scope>
    <source>
        <strain>2308</strain>
    </source>
</reference>
<gene>
    <name evidence="1" type="primary">radA</name>
    <name type="ordered locus">BAB1_0474</name>
</gene>
<evidence type="ECO:0000255" key="1">
    <source>
        <dbReference type="HAMAP-Rule" id="MF_01498"/>
    </source>
</evidence>
<evidence type="ECO:0000269" key="2">
    <source>
    </source>
</evidence>
<sequence>MAKTRVQFICQNCGAVHSRWAGKCDSCGEWNTLIEEGTNSGIGSGPAAMLSKRKGRAVALTSLSGEIEDAPRIVSGISELDRVTGGGFVRGSALLIGGDPGIGKSTLLTQAAAALSNRGHRIVYVSGEEAVAQIRLRAQRLGVAASAVELAAETNVEDIIATISSDNSGSKRPDLVIIDSIQTLWTDMADSAPGTVTQVRSSAQAMIRYAKQTGAAVVLVGHVTKDGQIAGPRVVEHMVDGVLYFEGEGGHHYRILRTVKNRFGPTDEIGVFEMSDGGLREVSNPSELFLGERNEKSPGAAVFAGMEGTRPVLVEIQALVAPSSLGTPRRAVVGWDGGRLAMILAVLESHCGVRFGQHDVYLNVAGGYRISEPAADIAVAAALVSSMAGIALPPDCVYFGEISLSGAVRAVSHAVQRLKEAEKLGFRQAEVPNGSGELWKDRNFRLMETAALADLVARIAASGAGKK</sequence>
<protein>
    <recommendedName>
        <fullName evidence="1">DNA repair protein RadA</fullName>
        <ecNumber evidence="1">3.6.4.-</ecNumber>
    </recommendedName>
    <alternativeName>
        <fullName evidence="1">Branch migration protein RadA</fullName>
    </alternativeName>
</protein>
<comment type="function">
    <text evidence="1">DNA-dependent ATPase involved in processing of recombination intermediates, plays a role in repairing DNA breaks. Stimulates the branch migration of RecA-mediated strand transfer reactions, allowing the 3' invading strand to extend heteroduplex DNA faster. Binds ssDNA in the presence of ADP but not other nucleotides, has ATPase activity that is stimulated by ssDNA and various branched DNA structures, but inhibited by SSB. Does not have RecA's homology-searching function.</text>
</comment>
<comment type="domain">
    <text evidence="1">Has a putative N-terminal zinc-finger, a middle region with homology to RecA with ATPase motifs including the RadA KNRFG motif, while the C-terminus is homologous to Lon protease.</text>
</comment>
<comment type="disruption phenotype">
    <text evidence="2">No alteration in UV resistance; does not replace RecA.</text>
</comment>
<comment type="similarity">
    <text evidence="1">Belongs to the RecA family. RadA subfamily.</text>
</comment>
<keyword id="KW-0067">ATP-binding</keyword>
<keyword id="KW-0227">DNA damage</keyword>
<keyword id="KW-0234">DNA repair</keyword>
<keyword id="KW-0238">DNA-binding</keyword>
<keyword id="KW-0378">Hydrolase</keyword>
<keyword id="KW-0479">Metal-binding</keyword>
<keyword id="KW-0547">Nucleotide-binding</keyword>
<keyword id="KW-1185">Reference proteome</keyword>
<keyword id="KW-0346">Stress response</keyword>
<keyword id="KW-0862">Zinc</keyword>
<keyword id="KW-0863">Zinc-finger</keyword>